<proteinExistence type="inferred from homology"/>
<keyword id="KW-1185">Reference proteome</keyword>
<keyword id="KW-0687">Ribonucleoprotein</keyword>
<keyword id="KW-0689">Ribosomal protein</keyword>
<accession>Q6FMW9</accession>
<protein>
    <recommendedName>
        <fullName evidence="2">Small ribosomal subunit protein uS8</fullName>
    </recommendedName>
    <alternativeName>
        <fullName>40S ribosomal protein S22</fullName>
    </alternativeName>
</protein>
<dbReference type="EMBL" id="CR380957">
    <property type="protein sequence ID" value="CAG61386.1"/>
    <property type="molecule type" value="Genomic_DNA"/>
</dbReference>
<dbReference type="RefSeq" id="XP_002999595.1">
    <property type="nucleotide sequence ID" value="XM_002999549.1"/>
</dbReference>
<dbReference type="RefSeq" id="XP_448425.1">
    <property type="nucleotide sequence ID" value="XM_448425.1"/>
</dbReference>
<dbReference type="SMR" id="Q6FMW9"/>
<dbReference type="FunCoup" id="Q6FMW9">
    <property type="interactions" value="1090"/>
</dbReference>
<dbReference type="STRING" id="284593.Q6FMW9"/>
<dbReference type="EnsemblFungi" id="CAGL0K04587g-T">
    <property type="protein sequence ID" value="CAGL0K04587g-T-p1"/>
    <property type="gene ID" value="CAGL0K04587g"/>
</dbReference>
<dbReference type="EnsemblFungi" id="CAGL0L08114g-T">
    <property type="protein sequence ID" value="CAGL0L08114g-T-p1"/>
    <property type="gene ID" value="CAGL0L08114g"/>
</dbReference>
<dbReference type="KEGG" id="cgr:2890004"/>
<dbReference type="KEGG" id="cgr:9488046"/>
<dbReference type="CGD" id="CAL0133769">
    <property type="gene designation" value="CAGL0K04587g"/>
</dbReference>
<dbReference type="CGD" id="CAL0135080">
    <property type="gene designation" value="CAGL0L08114g"/>
</dbReference>
<dbReference type="VEuPathDB" id="FungiDB:B1J91_K04587g"/>
<dbReference type="VEuPathDB" id="FungiDB:B1J91_L08114g"/>
<dbReference type="VEuPathDB" id="FungiDB:CAGL0K04587g"/>
<dbReference type="VEuPathDB" id="FungiDB:CAGL0L08114g"/>
<dbReference type="eggNOG" id="KOG1754">
    <property type="taxonomic scope" value="Eukaryota"/>
</dbReference>
<dbReference type="HOGENOM" id="CLU_098428_1_1_1"/>
<dbReference type="InParanoid" id="Q6FMW9"/>
<dbReference type="OMA" id="LPAKNFG"/>
<dbReference type="Proteomes" id="UP000002428">
    <property type="component" value="Chromosome K"/>
</dbReference>
<dbReference type="GO" id="GO:1990904">
    <property type="term" value="C:ribonucleoprotein complex"/>
    <property type="evidence" value="ECO:0007669"/>
    <property type="project" value="UniProtKB-KW"/>
</dbReference>
<dbReference type="GO" id="GO:0005840">
    <property type="term" value="C:ribosome"/>
    <property type="evidence" value="ECO:0007669"/>
    <property type="project" value="UniProtKB-KW"/>
</dbReference>
<dbReference type="GO" id="GO:0003735">
    <property type="term" value="F:structural constituent of ribosome"/>
    <property type="evidence" value="ECO:0007669"/>
    <property type="project" value="InterPro"/>
</dbReference>
<dbReference type="GO" id="GO:0006412">
    <property type="term" value="P:translation"/>
    <property type="evidence" value="ECO:0007669"/>
    <property type="project" value="InterPro"/>
</dbReference>
<dbReference type="FunFam" id="3.30.1370.30:FF:000001">
    <property type="entry name" value="40S ribosomal protein S15a"/>
    <property type="match status" value="1"/>
</dbReference>
<dbReference type="FunFam" id="3.30.1490.10:FF:000002">
    <property type="entry name" value="40S ribosomal protein S15a"/>
    <property type="match status" value="1"/>
</dbReference>
<dbReference type="Gene3D" id="3.30.1370.30">
    <property type="match status" value="1"/>
</dbReference>
<dbReference type="Gene3D" id="3.30.1490.10">
    <property type="match status" value="1"/>
</dbReference>
<dbReference type="HAMAP" id="MF_01302_A">
    <property type="entry name" value="Ribosomal_uS8_A"/>
    <property type="match status" value="1"/>
</dbReference>
<dbReference type="InterPro" id="IPR000630">
    <property type="entry name" value="Ribosomal_uS8"/>
</dbReference>
<dbReference type="InterPro" id="IPR047863">
    <property type="entry name" value="Ribosomal_uS8_CS"/>
</dbReference>
<dbReference type="InterPro" id="IPR035987">
    <property type="entry name" value="Ribosomal_uS8_sf"/>
</dbReference>
<dbReference type="NCBIfam" id="NF003115">
    <property type="entry name" value="PRK04034.1"/>
    <property type="match status" value="1"/>
</dbReference>
<dbReference type="PANTHER" id="PTHR11758">
    <property type="entry name" value="40S RIBOSOMAL PROTEIN S15A"/>
    <property type="match status" value="1"/>
</dbReference>
<dbReference type="Pfam" id="PF00410">
    <property type="entry name" value="Ribosomal_S8"/>
    <property type="match status" value="1"/>
</dbReference>
<dbReference type="SUPFAM" id="SSF56047">
    <property type="entry name" value="Ribosomal protein S8"/>
    <property type="match status" value="1"/>
</dbReference>
<dbReference type="PROSITE" id="PS00053">
    <property type="entry name" value="RIBOSOMAL_S8"/>
    <property type="match status" value="1"/>
</dbReference>
<sequence>MTRSSVLADALNAINNAEKTGKRQVLIRPSSKVIIKFLQVMQRHGYIGEFEYIDDHRSGKIVVQLNGRLNKCGVISPRFNVKIGDIEKWTANLLPARQFGYVILTTSAGIMDHEEARRKHVSGKILGFVY</sequence>
<name>RS22_CANGA</name>
<feature type="initiator methionine" description="Removed" evidence="1">
    <location>
        <position position="1"/>
    </location>
</feature>
<feature type="chain" id="PRO_0000126618" description="Small ribosomal subunit protein uS8">
    <location>
        <begin position="2"/>
        <end position="130"/>
    </location>
</feature>
<gene>
    <name type="primary">RPS22</name>
    <name type="ordered locus">CAGL0K04587g</name>
</gene>
<evidence type="ECO:0000250" key="1"/>
<evidence type="ECO:0000305" key="2"/>
<organism>
    <name type="scientific">Candida glabrata (strain ATCC 2001 / BCRC 20586 / JCM 3761 / NBRC 0622 / NRRL Y-65 / CBS 138)</name>
    <name type="common">Yeast</name>
    <name type="synonym">Nakaseomyces glabratus</name>
    <dbReference type="NCBI Taxonomy" id="284593"/>
    <lineage>
        <taxon>Eukaryota</taxon>
        <taxon>Fungi</taxon>
        <taxon>Dikarya</taxon>
        <taxon>Ascomycota</taxon>
        <taxon>Saccharomycotina</taxon>
        <taxon>Saccharomycetes</taxon>
        <taxon>Saccharomycetales</taxon>
        <taxon>Saccharomycetaceae</taxon>
        <taxon>Nakaseomyces</taxon>
    </lineage>
</organism>
<reference key="1">
    <citation type="journal article" date="2004" name="Nature">
        <title>Genome evolution in yeasts.</title>
        <authorList>
            <person name="Dujon B."/>
            <person name="Sherman D."/>
            <person name="Fischer G."/>
            <person name="Durrens P."/>
            <person name="Casaregola S."/>
            <person name="Lafontaine I."/>
            <person name="de Montigny J."/>
            <person name="Marck C."/>
            <person name="Neuveglise C."/>
            <person name="Talla E."/>
            <person name="Goffard N."/>
            <person name="Frangeul L."/>
            <person name="Aigle M."/>
            <person name="Anthouard V."/>
            <person name="Babour A."/>
            <person name="Barbe V."/>
            <person name="Barnay S."/>
            <person name="Blanchin S."/>
            <person name="Beckerich J.-M."/>
            <person name="Beyne E."/>
            <person name="Bleykasten C."/>
            <person name="Boisrame A."/>
            <person name="Boyer J."/>
            <person name="Cattolico L."/>
            <person name="Confanioleri F."/>
            <person name="de Daruvar A."/>
            <person name="Despons L."/>
            <person name="Fabre E."/>
            <person name="Fairhead C."/>
            <person name="Ferry-Dumazet H."/>
            <person name="Groppi A."/>
            <person name="Hantraye F."/>
            <person name="Hennequin C."/>
            <person name="Jauniaux N."/>
            <person name="Joyet P."/>
            <person name="Kachouri R."/>
            <person name="Kerrest A."/>
            <person name="Koszul R."/>
            <person name="Lemaire M."/>
            <person name="Lesur I."/>
            <person name="Ma L."/>
            <person name="Muller H."/>
            <person name="Nicaud J.-M."/>
            <person name="Nikolski M."/>
            <person name="Oztas S."/>
            <person name="Ozier-Kalogeropoulos O."/>
            <person name="Pellenz S."/>
            <person name="Potier S."/>
            <person name="Richard G.-F."/>
            <person name="Straub M.-L."/>
            <person name="Suleau A."/>
            <person name="Swennen D."/>
            <person name="Tekaia F."/>
            <person name="Wesolowski-Louvel M."/>
            <person name="Westhof E."/>
            <person name="Wirth B."/>
            <person name="Zeniou-Meyer M."/>
            <person name="Zivanovic Y."/>
            <person name="Bolotin-Fukuhara M."/>
            <person name="Thierry A."/>
            <person name="Bouchier C."/>
            <person name="Caudron B."/>
            <person name="Scarpelli C."/>
            <person name="Gaillardin C."/>
            <person name="Weissenbach J."/>
            <person name="Wincker P."/>
            <person name="Souciet J.-L."/>
        </authorList>
    </citation>
    <scope>NUCLEOTIDE SEQUENCE [LARGE SCALE GENOMIC DNA]</scope>
    <source>
        <strain>ATCC 2001 / BCRC 20586 / JCM 3761 / NBRC 0622 / NRRL Y-65 / CBS 138</strain>
    </source>
</reference>
<comment type="similarity">
    <text evidence="2">Belongs to the universal ribosomal protein uS8 family.</text>
</comment>